<evidence type="ECO:0000255" key="1">
    <source>
        <dbReference type="HAMAP-Rule" id="MF_01642"/>
    </source>
</evidence>
<accession>Q3MDN5</accession>
<keyword id="KW-0032">Aminotransferase</keyword>
<keyword id="KW-0663">Pyridoxal phosphate</keyword>
<keyword id="KW-0808">Transferase</keyword>
<gene>
    <name evidence="1" type="primary">dapL2</name>
    <name type="ordered locus">Ava_1277</name>
</gene>
<dbReference type="EC" id="2.6.1.83" evidence="1"/>
<dbReference type="EMBL" id="CP000117">
    <property type="protein sequence ID" value="ABA20901.1"/>
    <property type="molecule type" value="Genomic_DNA"/>
</dbReference>
<dbReference type="SMR" id="Q3MDN5"/>
<dbReference type="STRING" id="240292.Ava_1277"/>
<dbReference type="KEGG" id="ava:Ava_1277"/>
<dbReference type="eggNOG" id="COG0436">
    <property type="taxonomic scope" value="Bacteria"/>
</dbReference>
<dbReference type="HOGENOM" id="CLU_017584_4_5_3"/>
<dbReference type="BRENDA" id="2.6.1.83">
    <property type="organism ID" value="322"/>
</dbReference>
<dbReference type="UniPathway" id="UPA00034">
    <property type="reaction ID" value="UER00466"/>
</dbReference>
<dbReference type="Proteomes" id="UP000002533">
    <property type="component" value="Chromosome"/>
</dbReference>
<dbReference type="GO" id="GO:0010285">
    <property type="term" value="F:L,L-diaminopimelate aminotransferase activity"/>
    <property type="evidence" value="ECO:0007669"/>
    <property type="project" value="UniProtKB-UniRule"/>
</dbReference>
<dbReference type="GO" id="GO:0030170">
    <property type="term" value="F:pyridoxal phosphate binding"/>
    <property type="evidence" value="ECO:0007669"/>
    <property type="project" value="UniProtKB-UniRule"/>
</dbReference>
<dbReference type="GO" id="GO:0033362">
    <property type="term" value="P:lysine biosynthetic process via diaminopimelate, diaminopimelate-aminotransferase pathway"/>
    <property type="evidence" value="ECO:0007669"/>
    <property type="project" value="UniProtKB-UniRule"/>
</dbReference>
<dbReference type="CDD" id="cd00609">
    <property type="entry name" value="AAT_like"/>
    <property type="match status" value="1"/>
</dbReference>
<dbReference type="Gene3D" id="3.90.1150.10">
    <property type="entry name" value="Aspartate Aminotransferase, domain 1"/>
    <property type="match status" value="1"/>
</dbReference>
<dbReference type="Gene3D" id="3.40.640.10">
    <property type="entry name" value="Type I PLP-dependent aspartate aminotransferase-like (Major domain)"/>
    <property type="match status" value="1"/>
</dbReference>
<dbReference type="HAMAP" id="MF_01642">
    <property type="entry name" value="DapL_aminotrans_1"/>
    <property type="match status" value="1"/>
</dbReference>
<dbReference type="InterPro" id="IPR004839">
    <property type="entry name" value="Aminotransferase_I/II_large"/>
</dbReference>
<dbReference type="InterPro" id="IPR019942">
    <property type="entry name" value="DapL/ALD1"/>
</dbReference>
<dbReference type="InterPro" id="IPR050881">
    <property type="entry name" value="LL-DAP_aminotransferase"/>
</dbReference>
<dbReference type="InterPro" id="IPR004838">
    <property type="entry name" value="NHTrfase_class1_PyrdxlP-BS"/>
</dbReference>
<dbReference type="InterPro" id="IPR015424">
    <property type="entry name" value="PyrdxlP-dep_Trfase"/>
</dbReference>
<dbReference type="InterPro" id="IPR015421">
    <property type="entry name" value="PyrdxlP-dep_Trfase_major"/>
</dbReference>
<dbReference type="InterPro" id="IPR015422">
    <property type="entry name" value="PyrdxlP-dep_Trfase_small"/>
</dbReference>
<dbReference type="NCBIfam" id="NF006756">
    <property type="entry name" value="PRK09276.1"/>
    <property type="match status" value="1"/>
</dbReference>
<dbReference type="PANTHER" id="PTHR42832">
    <property type="entry name" value="AMINO ACID AMINOTRANSFERASE"/>
    <property type="match status" value="1"/>
</dbReference>
<dbReference type="PANTHER" id="PTHR42832:SF3">
    <property type="entry name" value="L-GLUTAMINE--4-(METHYLSULFANYL)-2-OXOBUTANOATE AMINOTRANSFERASE"/>
    <property type="match status" value="1"/>
</dbReference>
<dbReference type="Pfam" id="PF00155">
    <property type="entry name" value="Aminotran_1_2"/>
    <property type="match status" value="1"/>
</dbReference>
<dbReference type="SUPFAM" id="SSF53383">
    <property type="entry name" value="PLP-dependent transferases"/>
    <property type="match status" value="1"/>
</dbReference>
<dbReference type="PROSITE" id="PS00105">
    <property type="entry name" value="AA_TRANSFER_CLASS_1"/>
    <property type="match status" value="1"/>
</dbReference>
<organism>
    <name type="scientific">Trichormus variabilis (strain ATCC 29413 / PCC 7937)</name>
    <name type="common">Anabaena variabilis</name>
    <dbReference type="NCBI Taxonomy" id="240292"/>
    <lineage>
        <taxon>Bacteria</taxon>
        <taxon>Bacillati</taxon>
        <taxon>Cyanobacteriota</taxon>
        <taxon>Cyanophyceae</taxon>
        <taxon>Nostocales</taxon>
        <taxon>Nostocaceae</taxon>
        <taxon>Trichormus</taxon>
    </lineage>
</organism>
<name>DAPT2_TRIV2</name>
<sequence length="390" mass="43399">MQFAKRLEKIPPYLFAEINRKREALIAQGVDIINIGVGDPDKPTPAHILQAMREAIDEASNHNYPPYEGTQEFREAAVKWMERRFGVVDLNPNTEVVSSIGSKEAIHNTFLAFVEAGDYTLIPDPGYPVYRTSTIFAGGEPFTMPLKAENKFLPDLDLIPEEVARKAKMLWVNYPNNPTGALATLEFFEELVAFCQQHSILLCHDHAYSEMAYDGYKPPSVLQIPGAKDIAIEFHSLSKSYNMTGWRIGFAVGNAYAIQGLSQVKTNVDSGVFKAIQKAAIAAYNTDEVELQAVMSVYQNRRDIIVKGLQSLGWPIEPPKATLYVWVPVPPGYTSTEFTTLLLDKCGIVVPPGVGYGVSGEGYFRIALTICEERLHEAIQRMQDAGIRYS</sequence>
<protein>
    <recommendedName>
        <fullName evidence="1">LL-diaminopimelate aminotransferase 2</fullName>
        <shortName evidence="1">DAP-AT 2</shortName>
        <shortName evidence="1">DAP-aminotransferase 2</shortName>
        <shortName evidence="1">LL-DAP-aminotransferase 2</shortName>
        <ecNumber evidence="1">2.6.1.83</ecNumber>
    </recommendedName>
</protein>
<feature type="chain" id="PRO_0000342211" description="LL-diaminopimelate aminotransferase 2">
    <location>
        <begin position="1"/>
        <end position="390"/>
    </location>
</feature>
<feature type="binding site" evidence="1">
    <location>
        <position position="13"/>
    </location>
    <ligand>
        <name>substrate</name>
    </ligand>
</feature>
<feature type="binding site" evidence="1">
    <location>
        <position position="38"/>
    </location>
    <ligand>
        <name>substrate</name>
    </ligand>
</feature>
<feature type="binding site" evidence="1">
    <location>
        <position position="67"/>
    </location>
    <ligand>
        <name>pyridoxal 5'-phosphate</name>
        <dbReference type="ChEBI" id="CHEBI:597326"/>
    </ligand>
</feature>
<feature type="binding site" evidence="1">
    <location>
        <begin position="102"/>
        <end position="103"/>
    </location>
    <ligand>
        <name>pyridoxal 5'-phosphate</name>
        <dbReference type="ChEBI" id="CHEBI:597326"/>
    </ligand>
</feature>
<feature type="binding site" evidence="1">
    <location>
        <position position="103"/>
    </location>
    <ligand>
        <name>substrate</name>
    </ligand>
</feature>
<feature type="binding site" evidence="1">
    <location>
        <position position="127"/>
    </location>
    <ligand>
        <name>pyridoxal 5'-phosphate</name>
        <dbReference type="ChEBI" id="CHEBI:597326"/>
    </ligand>
</feature>
<feature type="binding site" evidence="1">
    <location>
        <position position="127"/>
    </location>
    <ligand>
        <name>substrate</name>
    </ligand>
</feature>
<feature type="binding site" evidence="1">
    <location>
        <position position="177"/>
    </location>
    <ligand>
        <name>pyridoxal 5'-phosphate</name>
        <dbReference type="ChEBI" id="CHEBI:597326"/>
    </ligand>
</feature>
<feature type="binding site" evidence="1">
    <location>
        <position position="177"/>
    </location>
    <ligand>
        <name>substrate</name>
    </ligand>
</feature>
<feature type="binding site" evidence="1">
    <location>
        <position position="208"/>
    </location>
    <ligand>
        <name>pyridoxal 5'-phosphate</name>
        <dbReference type="ChEBI" id="CHEBI:597326"/>
    </ligand>
</feature>
<feature type="binding site" evidence="1">
    <location>
        <begin position="236"/>
        <end position="238"/>
    </location>
    <ligand>
        <name>pyridoxal 5'-phosphate</name>
        <dbReference type="ChEBI" id="CHEBI:597326"/>
    </ligand>
</feature>
<feature type="binding site" evidence="1">
    <location>
        <position position="247"/>
    </location>
    <ligand>
        <name>pyridoxal 5'-phosphate</name>
        <dbReference type="ChEBI" id="CHEBI:597326"/>
    </ligand>
</feature>
<feature type="binding site" evidence="1">
    <location>
        <position position="365"/>
    </location>
    <ligand>
        <name>substrate</name>
    </ligand>
</feature>
<feature type="modified residue" description="N6-(pyridoxal phosphate)lysine" evidence="1">
    <location>
        <position position="239"/>
    </location>
</feature>
<reference key="1">
    <citation type="journal article" date="2014" name="Stand. Genomic Sci.">
        <title>Complete genome sequence of Anabaena variabilis ATCC 29413.</title>
        <authorList>
            <person name="Thiel T."/>
            <person name="Pratte B.S."/>
            <person name="Zhong J."/>
            <person name="Goodwin L."/>
            <person name="Copeland A."/>
            <person name="Lucas S."/>
            <person name="Han C."/>
            <person name="Pitluck S."/>
            <person name="Land M.L."/>
            <person name="Kyrpides N.C."/>
            <person name="Woyke T."/>
        </authorList>
    </citation>
    <scope>NUCLEOTIDE SEQUENCE [LARGE SCALE GENOMIC DNA]</scope>
    <source>
        <strain>ATCC 29413 / PCC 7937</strain>
    </source>
</reference>
<comment type="function">
    <text evidence="1">Involved in the synthesis of meso-diaminopimelate (m-DAP or DL-DAP), required for both lysine and peptidoglycan biosynthesis. Catalyzes the direct conversion of tetrahydrodipicolinate to LL-diaminopimelate.</text>
</comment>
<comment type="catalytic activity">
    <reaction evidence="1">
        <text>(2S,6S)-2,6-diaminopimelate + 2-oxoglutarate = (S)-2,3,4,5-tetrahydrodipicolinate + L-glutamate + H2O + H(+)</text>
        <dbReference type="Rhea" id="RHEA:23988"/>
        <dbReference type="ChEBI" id="CHEBI:15377"/>
        <dbReference type="ChEBI" id="CHEBI:15378"/>
        <dbReference type="ChEBI" id="CHEBI:16810"/>
        <dbReference type="ChEBI" id="CHEBI:16845"/>
        <dbReference type="ChEBI" id="CHEBI:29985"/>
        <dbReference type="ChEBI" id="CHEBI:57609"/>
        <dbReference type="EC" id="2.6.1.83"/>
    </reaction>
</comment>
<comment type="cofactor">
    <cofactor evidence="1">
        <name>pyridoxal 5'-phosphate</name>
        <dbReference type="ChEBI" id="CHEBI:597326"/>
    </cofactor>
</comment>
<comment type="pathway">
    <text evidence="1">Amino-acid biosynthesis; L-lysine biosynthesis via DAP pathway; LL-2,6-diaminopimelate from (S)-tetrahydrodipicolinate (aminotransferase route): step 1/1.</text>
</comment>
<comment type="subunit">
    <text evidence="1">Homodimer.</text>
</comment>
<comment type="similarity">
    <text evidence="1">Belongs to the class-I pyridoxal-phosphate-dependent aminotransferase family. LL-diaminopimelate aminotransferase subfamily.</text>
</comment>
<proteinExistence type="inferred from homology"/>